<proteinExistence type="evidence at protein level"/>
<gene>
    <name evidence="9" type="primary">DSP1</name>
    <name evidence="11" type="synonym">PTP135</name>
    <name type="ordered locus">At1g05000</name>
    <name type="ORF">T7A14.14</name>
</gene>
<accession>Q9ZVN4</accession>
<accession>Q0WS70</accession>
<name>DSP1_ARATH</name>
<sequence>MKLVEKTTTTEQDNGEDFCRTIIEVSEVNRNVFQAPGGEADPFRVVSGEELHLIPPLNFSMVDNGIFRSGFPDSANFSFLQTLGLRSIIYLCPEPYPESNLQFLKSNGIRLFQFGIEGNKEPFVNIPDHKIRMALKVLLDEKNHPVLIHCKRGKHRTGCLVGCLRKLQKWCLTSIFDEYQRFAAAKARVSDQRFMEIFDVSSFSHIPMSFSCSIR</sequence>
<dbReference type="EC" id="3.6.1.52" evidence="6 7"/>
<dbReference type="EMBL" id="FJ605097">
    <property type="protein sequence ID" value="ACU43461.1"/>
    <property type="molecule type" value="Genomic_DNA"/>
</dbReference>
<dbReference type="EMBL" id="AC005322">
    <property type="protein sequence ID" value="AAC97999.1"/>
    <property type="molecule type" value="Genomic_DNA"/>
</dbReference>
<dbReference type="EMBL" id="CP002684">
    <property type="protein sequence ID" value="AEE27777.1"/>
    <property type="molecule type" value="Genomic_DNA"/>
</dbReference>
<dbReference type="EMBL" id="AK228069">
    <property type="protein sequence ID" value="BAF00029.1"/>
    <property type="molecule type" value="mRNA"/>
</dbReference>
<dbReference type="EMBL" id="BT005210">
    <property type="protein sequence ID" value="AAO63274.1"/>
    <property type="molecule type" value="mRNA"/>
</dbReference>
<dbReference type="PIR" id="G86183">
    <property type="entry name" value="G86183"/>
</dbReference>
<dbReference type="RefSeq" id="NP_171993.1">
    <molecule id="Q9ZVN4-1"/>
    <property type="nucleotide sequence ID" value="NM_100379.3"/>
</dbReference>
<dbReference type="PDB" id="1XRI">
    <property type="method" value="X-ray"/>
    <property type="resolution" value="3.30 A"/>
    <property type="chains" value="A/B=52-202"/>
</dbReference>
<dbReference type="PDB" id="2Q47">
    <property type="method" value="X-ray"/>
    <property type="resolution" value="3.30 A"/>
    <property type="chains" value="A/B=52-202"/>
</dbReference>
<dbReference type="PDB" id="7MOD">
    <property type="method" value="X-ray"/>
    <property type="resolution" value="1.65 A"/>
    <property type="chains" value="A/B=49-215"/>
</dbReference>
<dbReference type="PDB" id="7MOE">
    <property type="method" value="X-ray"/>
    <property type="resolution" value="1.70 A"/>
    <property type="chains" value="A/B=49-215"/>
</dbReference>
<dbReference type="PDB" id="7MOF">
    <property type="method" value="X-ray"/>
    <property type="resolution" value="1.95 A"/>
    <property type="chains" value="A/B=49-215"/>
</dbReference>
<dbReference type="PDB" id="7MOG">
    <property type="method" value="X-ray"/>
    <property type="resolution" value="1.80 A"/>
    <property type="chains" value="A/B=49-215"/>
</dbReference>
<dbReference type="PDB" id="7MOH">
    <property type="method" value="X-ray"/>
    <property type="resolution" value="1.90 A"/>
    <property type="chains" value="A/B=49-215"/>
</dbReference>
<dbReference type="PDB" id="7MOI">
    <property type="method" value="X-ray"/>
    <property type="resolution" value="1.80 A"/>
    <property type="chains" value="A/B=49-215"/>
</dbReference>
<dbReference type="PDB" id="7MOJ">
    <property type="method" value="X-ray"/>
    <property type="resolution" value="1.90 A"/>
    <property type="chains" value="A/B=49-215"/>
</dbReference>
<dbReference type="PDB" id="7MOK">
    <property type="method" value="X-ray"/>
    <property type="resolution" value="1.85 A"/>
    <property type="chains" value="A/B=49-215"/>
</dbReference>
<dbReference type="PDB" id="7MOL">
    <property type="method" value="X-ray"/>
    <property type="resolution" value="1.90 A"/>
    <property type="chains" value="A/B=49-215"/>
</dbReference>
<dbReference type="PDB" id="7MOM">
    <property type="method" value="X-ray"/>
    <property type="resolution" value="1.70 A"/>
    <property type="chains" value="A/B=49-215"/>
</dbReference>
<dbReference type="PDBsum" id="1XRI"/>
<dbReference type="PDBsum" id="2Q47"/>
<dbReference type="PDBsum" id="7MOD"/>
<dbReference type="PDBsum" id="7MOE"/>
<dbReference type="PDBsum" id="7MOF"/>
<dbReference type="PDBsum" id="7MOG"/>
<dbReference type="PDBsum" id="7MOH"/>
<dbReference type="PDBsum" id="7MOI"/>
<dbReference type="PDBsum" id="7MOJ"/>
<dbReference type="PDBsum" id="7MOK"/>
<dbReference type="PDBsum" id="7MOL"/>
<dbReference type="PDBsum" id="7MOM"/>
<dbReference type="SMR" id="Q9ZVN4"/>
<dbReference type="BioGRID" id="24583">
    <property type="interactions" value="17"/>
</dbReference>
<dbReference type="FunCoup" id="Q9ZVN4">
    <property type="interactions" value="109"/>
</dbReference>
<dbReference type="STRING" id="3702.Q9ZVN4"/>
<dbReference type="ProteomicsDB" id="224295">
    <molecule id="Q9ZVN4-1"/>
</dbReference>
<dbReference type="DNASU" id="839348"/>
<dbReference type="EnsemblPlants" id="AT1G05000.1">
    <molecule id="Q9ZVN4-1"/>
    <property type="protein sequence ID" value="AT1G05000.1"/>
    <property type="gene ID" value="AT1G05000"/>
</dbReference>
<dbReference type="GeneID" id="839348"/>
<dbReference type="Gramene" id="AT1G05000.1">
    <molecule id="Q9ZVN4-1"/>
    <property type="protein sequence ID" value="AT1G05000.1"/>
    <property type="gene ID" value="AT1G05000"/>
</dbReference>
<dbReference type="KEGG" id="ath:AT1G05000"/>
<dbReference type="Araport" id="AT1G05000"/>
<dbReference type="TAIR" id="AT1G05000">
    <property type="gene designation" value="PFA-DSP1"/>
</dbReference>
<dbReference type="HOGENOM" id="CLU_047845_5_0_1"/>
<dbReference type="InParanoid" id="Q9ZVN4"/>
<dbReference type="PhylomeDB" id="Q9ZVN4"/>
<dbReference type="EvolutionaryTrace" id="Q9ZVN4"/>
<dbReference type="PRO" id="PR:Q9ZVN4"/>
<dbReference type="Proteomes" id="UP000006548">
    <property type="component" value="Chromosome 1"/>
</dbReference>
<dbReference type="ExpressionAtlas" id="Q9ZVN4">
    <property type="expression patterns" value="baseline and differential"/>
</dbReference>
<dbReference type="GO" id="GO:0052847">
    <property type="term" value="F:inositol-1,5-bisdiphosphate-2,3,4,6-tetrakisphosphate 5-diphosphatase activity"/>
    <property type="evidence" value="ECO:0000314"/>
    <property type="project" value="UniProtKB"/>
</dbReference>
<dbReference type="GO" id="GO:0052848">
    <property type="term" value="F:inositol-3,5-bisdiphosphate-2,3,4,6-tetrakisphosphate 5-diphosphatase activity"/>
    <property type="evidence" value="ECO:0007669"/>
    <property type="project" value="RHEA"/>
</dbReference>
<dbReference type="GO" id="GO:0052845">
    <property type="term" value="F:inositol-5-diphosphate-1,2,3,4,6-pentakisphosphate diphosphatase activity"/>
    <property type="evidence" value="ECO:0000314"/>
    <property type="project" value="UniProtKB"/>
</dbReference>
<dbReference type="GO" id="GO:0106211">
    <property type="term" value="F:inositol-5-diphosphate-1,3,4,6-tetrakisphosphate diphosphatase activity"/>
    <property type="evidence" value="ECO:0007669"/>
    <property type="project" value="RHEA"/>
</dbReference>
<dbReference type="GO" id="GO:0016791">
    <property type="term" value="F:phosphatase activity"/>
    <property type="evidence" value="ECO:0000314"/>
    <property type="project" value="UniProtKB"/>
</dbReference>
<dbReference type="GO" id="GO:0004725">
    <property type="term" value="F:protein tyrosine phosphatase activity"/>
    <property type="evidence" value="ECO:0007669"/>
    <property type="project" value="UniProtKB-EC"/>
</dbReference>
<dbReference type="CDD" id="cd14528">
    <property type="entry name" value="PFA-DSP_Siw14"/>
    <property type="match status" value="1"/>
</dbReference>
<dbReference type="FunFam" id="3.90.190.10:FF:000024">
    <property type="entry name" value="probable tyrosine-protein phosphatase At1g05000"/>
    <property type="match status" value="1"/>
</dbReference>
<dbReference type="Gene3D" id="3.90.190.10">
    <property type="entry name" value="Protein tyrosine phosphatase superfamily"/>
    <property type="match status" value="1"/>
</dbReference>
<dbReference type="InterPro" id="IPR020428">
    <property type="entry name" value="PFA-DSPs"/>
</dbReference>
<dbReference type="InterPro" id="IPR029021">
    <property type="entry name" value="Prot-tyrosine_phosphatase-like"/>
</dbReference>
<dbReference type="InterPro" id="IPR004861">
    <property type="entry name" value="Siw14-like"/>
</dbReference>
<dbReference type="InterPro" id="IPR016130">
    <property type="entry name" value="Tyr_Pase_AS"/>
</dbReference>
<dbReference type="InterPro" id="IPR020422">
    <property type="entry name" value="TYR_PHOSPHATASE_DUAL_dom"/>
</dbReference>
<dbReference type="PANTHER" id="PTHR31126:SF48">
    <property type="entry name" value="INOSITOL PHOSPHATASE SIW14"/>
    <property type="match status" value="1"/>
</dbReference>
<dbReference type="PANTHER" id="PTHR31126">
    <property type="entry name" value="TYROSINE-PROTEIN PHOSPHATASE"/>
    <property type="match status" value="1"/>
</dbReference>
<dbReference type="Pfam" id="PF03162">
    <property type="entry name" value="Y_phosphatase2"/>
    <property type="match status" value="1"/>
</dbReference>
<dbReference type="PRINTS" id="PR01911">
    <property type="entry name" value="PFDSPHPHTASE"/>
</dbReference>
<dbReference type="SUPFAM" id="SSF52799">
    <property type="entry name" value="(Phosphotyrosine protein) phosphatases II"/>
    <property type="match status" value="1"/>
</dbReference>
<dbReference type="PROSITE" id="PS00383">
    <property type="entry name" value="TYR_PHOSPHATASE_1"/>
    <property type="match status" value="1"/>
</dbReference>
<dbReference type="PROSITE" id="PS50054">
    <property type="entry name" value="TYR_PHOSPHATASE_DUAL"/>
    <property type="match status" value="1"/>
</dbReference>
<organism>
    <name type="scientific">Arabidopsis thaliana</name>
    <name type="common">Mouse-ear cress</name>
    <dbReference type="NCBI Taxonomy" id="3702"/>
    <lineage>
        <taxon>Eukaryota</taxon>
        <taxon>Viridiplantae</taxon>
        <taxon>Streptophyta</taxon>
        <taxon>Embryophyta</taxon>
        <taxon>Tracheophyta</taxon>
        <taxon>Spermatophyta</taxon>
        <taxon>Magnoliopsida</taxon>
        <taxon>eudicotyledons</taxon>
        <taxon>Gunneridae</taxon>
        <taxon>Pentapetalae</taxon>
        <taxon>rosids</taxon>
        <taxon>malvids</taxon>
        <taxon>Brassicales</taxon>
        <taxon>Brassicaceae</taxon>
        <taxon>Camelineae</taxon>
        <taxon>Arabidopsis</taxon>
    </lineage>
</organism>
<reference key="1">
    <citation type="submission" date="2009-01" db="EMBL/GenBank/DDBJ databases">
        <title>Arabidopsis thaliana PTP135 gene, complete cds.</title>
        <authorList>
            <person name="Gao Z."/>
            <person name="Jia W."/>
        </authorList>
    </citation>
    <scope>NUCLEOTIDE SEQUENCE [GENOMIC DNA]</scope>
</reference>
<reference key="2">
    <citation type="journal article" date="2000" name="Nature">
        <title>Sequence and analysis of chromosome 1 of the plant Arabidopsis thaliana.</title>
        <authorList>
            <person name="Theologis A."/>
            <person name="Ecker J.R."/>
            <person name="Palm C.J."/>
            <person name="Federspiel N.A."/>
            <person name="Kaul S."/>
            <person name="White O."/>
            <person name="Alonso J."/>
            <person name="Altafi H."/>
            <person name="Araujo R."/>
            <person name="Bowman C.L."/>
            <person name="Brooks S.Y."/>
            <person name="Buehler E."/>
            <person name="Chan A."/>
            <person name="Chao Q."/>
            <person name="Chen H."/>
            <person name="Cheuk R.F."/>
            <person name="Chin C.W."/>
            <person name="Chung M.K."/>
            <person name="Conn L."/>
            <person name="Conway A.B."/>
            <person name="Conway A.R."/>
            <person name="Creasy T.H."/>
            <person name="Dewar K."/>
            <person name="Dunn P."/>
            <person name="Etgu P."/>
            <person name="Feldblyum T.V."/>
            <person name="Feng J.-D."/>
            <person name="Fong B."/>
            <person name="Fujii C.Y."/>
            <person name="Gill J.E."/>
            <person name="Goldsmith A.D."/>
            <person name="Haas B."/>
            <person name="Hansen N.F."/>
            <person name="Hughes B."/>
            <person name="Huizar L."/>
            <person name="Hunter J.L."/>
            <person name="Jenkins J."/>
            <person name="Johnson-Hopson C."/>
            <person name="Khan S."/>
            <person name="Khaykin E."/>
            <person name="Kim C.J."/>
            <person name="Koo H.L."/>
            <person name="Kremenetskaia I."/>
            <person name="Kurtz D.B."/>
            <person name="Kwan A."/>
            <person name="Lam B."/>
            <person name="Langin-Hooper S."/>
            <person name="Lee A."/>
            <person name="Lee J.M."/>
            <person name="Lenz C.A."/>
            <person name="Li J.H."/>
            <person name="Li Y.-P."/>
            <person name="Lin X."/>
            <person name="Liu S.X."/>
            <person name="Liu Z.A."/>
            <person name="Luros J.S."/>
            <person name="Maiti R."/>
            <person name="Marziali A."/>
            <person name="Militscher J."/>
            <person name="Miranda M."/>
            <person name="Nguyen M."/>
            <person name="Nierman W.C."/>
            <person name="Osborne B.I."/>
            <person name="Pai G."/>
            <person name="Peterson J."/>
            <person name="Pham P.K."/>
            <person name="Rizzo M."/>
            <person name="Rooney T."/>
            <person name="Rowley D."/>
            <person name="Sakano H."/>
            <person name="Salzberg S.L."/>
            <person name="Schwartz J.R."/>
            <person name="Shinn P."/>
            <person name="Southwick A.M."/>
            <person name="Sun H."/>
            <person name="Tallon L.J."/>
            <person name="Tambunga G."/>
            <person name="Toriumi M.J."/>
            <person name="Town C.D."/>
            <person name="Utterback T."/>
            <person name="Van Aken S."/>
            <person name="Vaysberg M."/>
            <person name="Vysotskaia V.S."/>
            <person name="Walker M."/>
            <person name="Wu D."/>
            <person name="Yu G."/>
            <person name="Fraser C.M."/>
            <person name="Venter J.C."/>
            <person name="Davis R.W."/>
        </authorList>
    </citation>
    <scope>NUCLEOTIDE SEQUENCE [LARGE SCALE GENOMIC DNA]</scope>
    <source>
        <strain>cv. Columbia</strain>
    </source>
</reference>
<reference key="3">
    <citation type="journal article" date="2017" name="Plant J.">
        <title>Araport11: a complete reannotation of the Arabidopsis thaliana reference genome.</title>
        <authorList>
            <person name="Cheng C.Y."/>
            <person name="Krishnakumar V."/>
            <person name="Chan A.P."/>
            <person name="Thibaud-Nissen F."/>
            <person name="Schobel S."/>
            <person name="Town C.D."/>
        </authorList>
    </citation>
    <scope>GENOME REANNOTATION</scope>
    <source>
        <strain>cv. Columbia</strain>
    </source>
</reference>
<reference key="4">
    <citation type="journal article" date="2003" name="Science">
        <title>Empirical analysis of transcriptional activity in the Arabidopsis genome.</title>
        <authorList>
            <person name="Yamada K."/>
            <person name="Lim J."/>
            <person name="Dale J.M."/>
            <person name="Chen H."/>
            <person name="Shinn P."/>
            <person name="Palm C.J."/>
            <person name="Southwick A.M."/>
            <person name="Wu H.C."/>
            <person name="Kim C.J."/>
            <person name="Nguyen M."/>
            <person name="Pham P.K."/>
            <person name="Cheuk R.F."/>
            <person name="Karlin-Newmann G."/>
            <person name="Liu S.X."/>
            <person name="Lam B."/>
            <person name="Sakano H."/>
            <person name="Wu T."/>
            <person name="Yu G."/>
            <person name="Miranda M."/>
            <person name="Quach H.L."/>
            <person name="Tripp M."/>
            <person name="Chang C.H."/>
            <person name="Lee J.M."/>
            <person name="Toriumi M.J."/>
            <person name="Chan M.M."/>
            <person name="Tang C.C."/>
            <person name="Onodera C.S."/>
            <person name="Deng J.M."/>
            <person name="Akiyama K."/>
            <person name="Ansari Y."/>
            <person name="Arakawa T."/>
            <person name="Banh J."/>
            <person name="Banno F."/>
            <person name="Bowser L."/>
            <person name="Brooks S.Y."/>
            <person name="Carninci P."/>
            <person name="Chao Q."/>
            <person name="Choy N."/>
            <person name="Enju A."/>
            <person name="Goldsmith A.D."/>
            <person name="Gurjal M."/>
            <person name="Hansen N.F."/>
            <person name="Hayashizaki Y."/>
            <person name="Johnson-Hopson C."/>
            <person name="Hsuan V.W."/>
            <person name="Iida K."/>
            <person name="Karnes M."/>
            <person name="Khan S."/>
            <person name="Koesema E."/>
            <person name="Ishida J."/>
            <person name="Jiang P.X."/>
            <person name="Jones T."/>
            <person name="Kawai J."/>
            <person name="Kamiya A."/>
            <person name="Meyers C."/>
            <person name="Nakajima M."/>
            <person name="Narusaka M."/>
            <person name="Seki M."/>
            <person name="Sakurai T."/>
            <person name="Satou M."/>
            <person name="Tamse R."/>
            <person name="Vaysberg M."/>
            <person name="Wallender E.K."/>
            <person name="Wong C."/>
            <person name="Yamamura Y."/>
            <person name="Yuan S."/>
            <person name="Shinozaki K."/>
            <person name="Davis R.W."/>
            <person name="Theologis A."/>
            <person name="Ecker J.R."/>
        </authorList>
    </citation>
    <scope>NUCLEOTIDE SEQUENCE [LARGE SCALE MRNA]</scope>
    <source>
        <strain>cv. Columbia</strain>
    </source>
</reference>
<reference key="5">
    <citation type="submission" date="2006-07" db="EMBL/GenBank/DDBJ databases">
        <title>Large-scale analysis of RIKEN Arabidopsis full-length (RAFL) cDNAs.</title>
        <authorList>
            <person name="Totoki Y."/>
            <person name="Seki M."/>
            <person name="Ishida J."/>
            <person name="Nakajima M."/>
            <person name="Enju A."/>
            <person name="Kamiya A."/>
            <person name="Narusaka M."/>
            <person name="Shin-i T."/>
            <person name="Nakagawa M."/>
            <person name="Sakamoto N."/>
            <person name="Oishi K."/>
            <person name="Kohara Y."/>
            <person name="Kobayashi M."/>
            <person name="Toyoda A."/>
            <person name="Sakaki Y."/>
            <person name="Sakurai T."/>
            <person name="Iida K."/>
            <person name="Akiyama K."/>
            <person name="Satou M."/>
            <person name="Toyoda T."/>
            <person name="Konagaya A."/>
            <person name="Carninci P."/>
            <person name="Kawai J."/>
            <person name="Hayashizaki Y."/>
            <person name="Shinozaki K."/>
        </authorList>
    </citation>
    <scope>NUCLEOTIDE SEQUENCE [LARGE SCALE MRNA]</scope>
    <source>
        <strain>cv. Columbia</strain>
    </source>
</reference>
<reference key="6">
    <citation type="journal article" date="2007" name="J. Mol. Biol.">
        <title>A novel phosphatase family, structurally related to dual-specificity phosphatases, that displays unique amino acid sequence and substrate specificity.</title>
        <authorList>
            <person name="Roma-Mateo C."/>
            <person name="Rios P."/>
            <person name="Tabernero L."/>
            <person name="Attwood T.K."/>
            <person name="Pulido R."/>
        </authorList>
    </citation>
    <scope>FUNCTION</scope>
    <scope>MUTAGENESIS OF GLU-117 AND ASP-191</scope>
</reference>
<reference key="7">
    <citation type="journal article" date="2011" name="Mol. Genet. Genomics">
        <title>Phylogenetic and genetic linkage between novel atypical dual-specificity phosphatases from non-metazoan organisms.</title>
        <authorList>
            <person name="Roma-Mateo C."/>
            <person name="Sacristan-Reviriego A."/>
            <person name="Beresford N.J."/>
            <person name="Caparros-Martin J.A."/>
            <person name="Culianez-Macia F.A."/>
            <person name="Martin H."/>
            <person name="Molina M."/>
            <person name="Tabernero L."/>
            <person name="Pulido R."/>
        </authorList>
    </citation>
    <scope>FUNCTION</scope>
    <scope>TISSUE SPECIFICITY</scope>
    <scope>MUTAGENESIS OF CYS-150 AND HIS-155</scope>
</reference>
<reference key="8">
    <citation type="journal article" date="2022" name="Biochemistry">
        <title>Arabidopsis PFA-DSP-Type Phosphohydrolases Target Specific Inositol Pyrophosphate Messengers.</title>
        <authorList>
            <person name="Gaugler P."/>
            <person name="Schneider R."/>
            <person name="Liu G."/>
            <person name="Qiu D."/>
            <person name="Weber J."/>
            <person name="Schmid J."/>
            <person name="Jork N."/>
            <person name="Haener M."/>
            <person name="Ritter K."/>
            <person name="Fernandez-Rebollo N."/>
            <person name="Giehl R.F.H."/>
            <person name="Trung M.N."/>
            <person name="Yadav R."/>
            <person name="Fiedler D."/>
            <person name="Gaugler V."/>
            <person name="Jessen H.J."/>
            <person name="Schaaf G."/>
            <person name="Laha D."/>
        </authorList>
    </citation>
    <scope>FUNCTION</scope>
    <scope>CATALYTIC ACTIVITY</scope>
    <scope>ACTIVITY REGULATION</scope>
    <scope>MUTAGENESIS OF CYS-150</scope>
</reference>
<reference evidence="13" key="9">
    <citation type="journal article" date="2007" name="Structure">
        <title>Ensemble refinement of protein crystal structures: validation and application.</title>
        <authorList>
            <person name="Levin E.J."/>
            <person name="Kondrashov D.A."/>
            <person name="Wesenberg G.E."/>
            <person name="Phillips G.N. Jr."/>
        </authorList>
    </citation>
    <scope>X-RAY CRYSTALLOGRAPHY (3.30 ANGSTROMS) OF 52-202</scope>
</reference>
<reference evidence="12" key="10">
    <citation type="journal article" date="2008" name="Proteins">
        <title>Structural and functional characterization of a novel phosphatase from the Arabidopsis thaliana gene locus At1g05000.</title>
        <authorList>
            <person name="Aceti D.J."/>
            <person name="Bitto E."/>
            <person name="Yakunin A.F."/>
            <person name="Proudfoot M."/>
            <person name="Bingman C.A."/>
            <person name="Frederick R.O."/>
            <person name="Sreenath H.K."/>
            <person name="Vojtik F.C."/>
            <person name="Wrobel R.L."/>
            <person name="Fox B.G."/>
            <person name="Markley J.L."/>
            <person name="Phillips G.N."/>
        </authorList>
    </citation>
    <scope>X-RAY CRYSTALLOGRAPHY (3.30 ANGSTROMS) OF 52-202</scope>
    <scope>FUNCTION</scope>
    <scope>BIOPHYSICOCHEMICAL PROPERTIES</scope>
    <scope>SUBUNIT</scope>
</reference>
<reference evidence="14 15 16 17 18 19 20 21 22 23" key="11">
    <citation type="journal article" date="2022" name="Nat. Commun.">
        <title>A structural expose of noncanonical molecular reactivity within the protein tyrosine phosphatase WPD loop.</title>
        <authorList>
            <person name="Wang H."/>
            <person name="Perera L."/>
            <person name="Jork N."/>
            <person name="Zong G."/>
            <person name="Riley A.M."/>
            <person name="Potter B.V.L."/>
            <person name="Jessen H.J."/>
            <person name="Shears S.B."/>
        </authorList>
    </citation>
    <scope>X-RAY CRYSTALLOGRAPHY (1.65 ANGSTROMS) OF 49-215 IN COMPLEX WITH 1D-MYO-INOSITOL HEXAKISPHOSPHATE</scope>
    <scope>FUNCTION</scope>
    <scope>CATALYTIC ACTIVITY</scope>
    <scope>SUBUNIT</scope>
    <scope>MUTAGENESIS OF CYS-150; HIS-155; THR-157 AND ASP-191</scope>
</reference>
<keyword id="KW-0002">3D-structure</keyword>
<keyword id="KW-0025">Alternative splicing</keyword>
<keyword id="KW-0378">Hydrolase</keyword>
<keyword id="KW-1185">Reference proteome</keyword>
<feature type="chain" id="PRO_0000094923" description="Inositol diphosphatase DSP1">
    <location>
        <begin position="1"/>
        <end position="215"/>
    </location>
</feature>
<feature type="domain" description="Tyrosine-protein phosphatase" evidence="2">
    <location>
        <begin position="58"/>
        <end position="209"/>
    </location>
</feature>
<feature type="region of interest" description="WPD loop important for active site topology" evidence="10">
    <location>
        <begin position="114"/>
        <end position="126"/>
    </location>
</feature>
<feature type="active site" description="Phosphocysteine intermediate" evidence="2">
    <location>
        <position position="150"/>
    </location>
</feature>
<feature type="binding site" evidence="16">
    <location>
        <position position="125"/>
    </location>
    <ligand>
        <name>1D-myo-inositol hexakisphosphate</name>
        <dbReference type="ChEBI" id="CHEBI:58130"/>
    </ligand>
</feature>
<feature type="binding site" evidence="16">
    <location>
        <position position="126"/>
    </location>
    <ligand>
        <name>1D-myo-inositol hexakisphosphate</name>
        <dbReference type="ChEBI" id="CHEBI:58130"/>
    </ligand>
</feature>
<feature type="binding site" evidence="16">
    <location>
        <position position="129"/>
    </location>
    <ligand>
        <name>1D-myo-inositol hexakisphosphate</name>
        <dbReference type="ChEBI" id="CHEBI:58130"/>
    </ligand>
</feature>
<feature type="binding site" evidence="16">
    <location>
        <position position="130"/>
    </location>
    <ligand>
        <name>1D-myo-inositol hexakisphosphate</name>
        <dbReference type="ChEBI" id="CHEBI:58130"/>
    </ligand>
</feature>
<feature type="site" description="Transition state stabilizer" evidence="1">
    <location>
        <position position="156"/>
    </location>
</feature>
<feature type="mutagenesis site" description="Reduces phosphatase activity toward para-nitrophenyl phosphate 2-fold." evidence="3">
    <original>E</original>
    <variation>A</variation>
    <location>
        <position position="117"/>
    </location>
</feature>
<feature type="mutagenesis site" description="Abolishes activity." evidence="5 6 7">
    <original>C</original>
    <variation>S</variation>
    <location>
        <position position="150"/>
    </location>
</feature>
<feature type="mutagenesis site" description="Abolishes phosphatase activity toward the phosphoinositides PI(3,4,5)P3 and PI(3,5)P2; reduces phosphatase activity toward para-nitrophenyl phosphate and O-methylfluorescein phosphate. Strongly reduces activity against 5-InsP(7)." evidence="5 6">
    <original>H</original>
    <variation>G</variation>
    <variation>S</variation>
    <variation>D</variation>
    <variation>E</variation>
    <variation>L</variation>
    <location>
        <position position="155"/>
    </location>
</feature>
<feature type="mutagenesis site" description="Strongly reduces activity." evidence="6">
    <original>T</original>
    <variation>A</variation>
    <location>
        <position position="157"/>
    </location>
</feature>
<feature type="mutagenesis site" description="Strongly reduces activity." evidence="3 6">
    <original>D</original>
    <variation>A</variation>
    <location>
        <position position="191"/>
    </location>
</feature>
<feature type="strand" evidence="25">
    <location>
        <begin position="60"/>
        <end position="63"/>
    </location>
</feature>
<feature type="strand" evidence="25">
    <location>
        <begin position="66"/>
        <end position="70"/>
    </location>
</feature>
<feature type="helix" evidence="25">
    <location>
        <begin position="74"/>
        <end position="76"/>
    </location>
</feature>
<feature type="helix" evidence="25">
    <location>
        <begin position="77"/>
        <end position="81"/>
    </location>
</feature>
<feature type="turn" evidence="25">
    <location>
        <begin position="82"/>
        <end position="84"/>
    </location>
</feature>
<feature type="strand" evidence="25">
    <location>
        <begin position="86"/>
        <end position="90"/>
    </location>
</feature>
<feature type="helix" evidence="25">
    <location>
        <begin position="98"/>
        <end position="107"/>
    </location>
</feature>
<feature type="strand" evidence="25">
    <location>
        <begin position="110"/>
        <end position="113"/>
    </location>
</feature>
<feature type="helix" evidence="24">
    <location>
        <begin position="121"/>
        <end position="123"/>
    </location>
</feature>
<feature type="helix" evidence="25">
    <location>
        <begin position="128"/>
        <end position="139"/>
    </location>
</feature>
<feature type="helix" evidence="25">
    <location>
        <begin position="141"/>
        <end position="143"/>
    </location>
</feature>
<feature type="strand" evidence="25">
    <location>
        <begin position="145"/>
        <end position="149"/>
    </location>
</feature>
<feature type="strand" evidence="25">
    <location>
        <begin position="151"/>
        <end position="155"/>
    </location>
</feature>
<feature type="helix" evidence="25">
    <location>
        <begin position="156"/>
        <end position="167"/>
    </location>
</feature>
<feature type="helix" evidence="25">
    <location>
        <begin position="172"/>
        <end position="183"/>
    </location>
</feature>
<feature type="helix" evidence="25">
    <location>
        <begin position="184"/>
        <end position="186"/>
    </location>
</feature>
<feature type="helix" evidence="25">
    <location>
        <begin position="189"/>
        <end position="197"/>
    </location>
</feature>
<feature type="helix" evidence="25">
    <location>
        <begin position="201"/>
        <end position="203"/>
    </location>
</feature>
<protein>
    <recommendedName>
        <fullName evidence="9">Inositol diphosphatase DSP1</fullName>
        <ecNumber evidence="6 7">3.6.1.52</ecNumber>
    </recommendedName>
    <alternativeName>
        <fullName evidence="9">Inositol pyrophosphate phosphatase DSP1</fullName>
    </alternativeName>
    <alternativeName>
        <fullName evidence="8">Protein PLANT AND FUNGI ATYPICAL DUAL-SPECIFICITY PHOSPHATASE 1</fullName>
        <shortName evidence="8">AtPFA-DSP1</shortName>
    </alternativeName>
</protein>
<comment type="function">
    <text evidence="3 4 5 6 7">Cleaves the beta-phosphate at the 5-position of soluble inositol pyrophosphates (PubMed:35468885, PubMed:35640071). Has highest activity on 5-diphosphoinositol 1,2,3,4,6-pentakisphosphate (5-InsP(7)), 1,5-bis-diphosphoinositol 2,3,4,6-tetrakisphosphate (1,5-InsP(8)) and 3,5-InsP(8), but has weak activity against 1-diphosphoinositol 2,3,4,5,6-pentakisphosphate (1-InsP(7)) (PubMed:18433060, PubMed:35468885). Dephosphorylates the phosphoinositides PI(3,4,5)P3, PI(3,5)P2, but not PI(3)P, PI(3,4)P2 or PI(4,5)P2 (PubMed:17976645). Possesses phosphotyrosine phosphatase activity in vitro, and can hydrolyze para-nitrophenyl phosphate, O-methylfluorescein phosphate, polyphosphate and ATP (PubMed:18433060, PubMed:21409566).</text>
</comment>
<comment type="catalytic activity">
    <reaction evidence="6 7">
        <text>5-diphospho-1D-myo-inositol 1,2,3,4,6-pentakisphosphate + H2O = 1D-myo-inositol hexakisphosphate + phosphate + H(+)</text>
        <dbReference type="Rhea" id="RHEA:22384"/>
        <dbReference type="ChEBI" id="CHEBI:15377"/>
        <dbReference type="ChEBI" id="CHEBI:15378"/>
        <dbReference type="ChEBI" id="CHEBI:43474"/>
        <dbReference type="ChEBI" id="CHEBI:58130"/>
        <dbReference type="ChEBI" id="CHEBI:58628"/>
        <dbReference type="EC" id="3.6.1.52"/>
    </reaction>
    <physiologicalReaction direction="left-to-right" evidence="6 7">
        <dbReference type="Rhea" id="RHEA:22385"/>
    </physiologicalReaction>
</comment>
<comment type="catalytic activity">
    <reaction evidence="6 7">
        <text>1,5-bis(diphospho)-1D-myo-inositol 2,3,4,6-tetrakisphosphate + H2O = 1-diphospho-1D-myo-inositol 2,3,4,5,6-pentakisphosphate + phosphate + 2 H(+)</text>
        <dbReference type="Rhea" id="RHEA:79699"/>
        <dbReference type="ChEBI" id="CHEBI:15377"/>
        <dbReference type="ChEBI" id="CHEBI:15378"/>
        <dbReference type="ChEBI" id="CHEBI:43474"/>
        <dbReference type="ChEBI" id="CHEBI:74946"/>
        <dbReference type="ChEBI" id="CHEBI:77983"/>
        <dbReference type="EC" id="3.6.1.52"/>
    </reaction>
    <physiologicalReaction direction="left-to-right" evidence="6 7">
        <dbReference type="Rhea" id="RHEA:79700"/>
    </physiologicalReaction>
</comment>
<comment type="catalytic activity">
    <reaction evidence="7">
        <text>3,5-bis(diphospho)-1D-myo-inositol 1,2,4,6-tetrakisphosphate + H2O = 3-diphospho-1D-myo-inositol 1,2,4,5,6-pentakisphosphate + phosphate + 2 H(+)</text>
        <dbReference type="Rhea" id="RHEA:56312"/>
        <dbReference type="ChEBI" id="CHEBI:15377"/>
        <dbReference type="ChEBI" id="CHEBI:15378"/>
        <dbReference type="ChEBI" id="CHEBI:43474"/>
        <dbReference type="ChEBI" id="CHEBI:140372"/>
        <dbReference type="ChEBI" id="CHEBI:140374"/>
        <dbReference type="EC" id="3.6.1.52"/>
    </reaction>
    <physiologicalReaction direction="left-to-right" evidence="7">
        <dbReference type="Rhea" id="RHEA:56313"/>
    </physiologicalReaction>
</comment>
<comment type="catalytic activity">
    <reaction evidence="6 7">
        <text>6-diphospho-1D-myo-inositol pentakisphosphate + H2O = 1D-myo-inositol hexakisphosphate + phosphate + H(+)</text>
        <dbReference type="Rhea" id="RHEA:79703"/>
        <dbReference type="ChEBI" id="CHEBI:15377"/>
        <dbReference type="ChEBI" id="CHEBI:15378"/>
        <dbReference type="ChEBI" id="CHEBI:43474"/>
        <dbReference type="ChEBI" id="CHEBI:58130"/>
        <dbReference type="ChEBI" id="CHEBI:230534"/>
        <dbReference type="EC" id="3.6.1.52"/>
    </reaction>
    <physiologicalReaction direction="left-to-right" evidence="6 7">
        <dbReference type="Rhea" id="RHEA:79704"/>
    </physiologicalReaction>
</comment>
<comment type="catalytic activity">
    <reaction evidence="6">
        <text>5-diphospho-1D-myo-inositol 1,3,4,6-tetrakisphosphate + H2O = 1D-myo-inositol 1,3,4,5,6-pentakisphosphate + phosphate + H(+)</text>
        <dbReference type="Rhea" id="RHEA:59500"/>
        <dbReference type="ChEBI" id="CHEBI:15377"/>
        <dbReference type="ChEBI" id="CHEBI:15378"/>
        <dbReference type="ChEBI" id="CHEBI:43474"/>
        <dbReference type="ChEBI" id="CHEBI:57733"/>
        <dbReference type="ChEBI" id="CHEBI:142939"/>
        <dbReference type="EC" id="3.6.1.52"/>
    </reaction>
    <physiologicalReaction direction="left-to-right" evidence="6">
        <dbReference type="Rhea" id="RHEA:59501"/>
    </physiologicalReaction>
</comment>
<comment type="activity regulation">
    <text evidence="7">Inhibited by manganese, calcium and zinc ions but not magnesium ions.</text>
</comment>
<comment type="biophysicochemical properties">
    <kinetics>
        <KM evidence="4">0.063 mM for polyphosphate</KM>
        <KM evidence="4">0.38 mM for ATP</KM>
        <KM evidence="4">0.88 mM for phosphotyrosine</KM>
        <KM evidence="4">0.67 mM for para-nitrophenyl phosphate</KM>
    </kinetics>
    <phDependence>
        <text evidence="4">Optimum pH is 5.0 (with polyphosphate as substrate).</text>
    </phDependence>
</comment>
<comment type="subunit">
    <text evidence="4 6">Homodimer and homohexamer; behaves as a monomer in solution (PubMed:18433060, PubMed:35468885).</text>
</comment>
<comment type="alternative products">
    <event type="alternative splicing"/>
    <isoform>
        <id>Q9ZVN4-1</id>
        <name>1</name>
        <sequence type="displayed"/>
    </isoform>
    <text>A number of isoforms are produced. According to EST sequences.</text>
</comment>
<comment type="tissue specificity">
    <text evidence="5">Highly expressed in siliques and at lower levels in roots, leaves and flowers.</text>
</comment>
<comment type="similarity">
    <text evidence="9">Belongs to the protein-tyrosine phosphatase family. Atypical dual-specificity phosphatase Siw14-like subfamily.</text>
</comment>
<comment type="caution">
    <text evidence="6">Was initially described as a protein tyrosine phosphatase and has phosphotyrosine phosphatase activity in vitro but is now thought to function as an inositol pyrophosphate phosphatase.</text>
</comment>
<evidence type="ECO:0000250" key="1">
    <source>
        <dbReference type="UniProtKB" id="P53965"/>
    </source>
</evidence>
<evidence type="ECO:0000255" key="2">
    <source>
        <dbReference type="PROSITE-ProRule" id="PRU00160"/>
    </source>
</evidence>
<evidence type="ECO:0000269" key="3">
    <source>
    </source>
</evidence>
<evidence type="ECO:0000269" key="4">
    <source>
    </source>
</evidence>
<evidence type="ECO:0000269" key="5">
    <source>
    </source>
</evidence>
<evidence type="ECO:0000269" key="6">
    <source>
    </source>
</evidence>
<evidence type="ECO:0000269" key="7">
    <source>
    </source>
</evidence>
<evidence type="ECO:0000303" key="8">
    <source>
    </source>
</evidence>
<evidence type="ECO:0000305" key="9"/>
<evidence type="ECO:0000305" key="10">
    <source>
    </source>
</evidence>
<evidence type="ECO:0000312" key="11">
    <source>
        <dbReference type="EMBL" id="ACU43461.1"/>
    </source>
</evidence>
<evidence type="ECO:0007744" key="12">
    <source>
        <dbReference type="PDB" id="1XRI"/>
    </source>
</evidence>
<evidence type="ECO:0007744" key="13">
    <source>
        <dbReference type="PDB" id="2Q47"/>
    </source>
</evidence>
<evidence type="ECO:0007744" key="14">
    <source>
        <dbReference type="PDB" id="7MOD"/>
    </source>
</evidence>
<evidence type="ECO:0007744" key="15">
    <source>
        <dbReference type="PDB" id="7MOE"/>
    </source>
</evidence>
<evidence type="ECO:0007744" key="16">
    <source>
        <dbReference type="PDB" id="7MOF"/>
    </source>
</evidence>
<evidence type="ECO:0007744" key="17">
    <source>
        <dbReference type="PDB" id="7MOG"/>
    </source>
</evidence>
<evidence type="ECO:0007744" key="18">
    <source>
        <dbReference type="PDB" id="7MOH"/>
    </source>
</evidence>
<evidence type="ECO:0007744" key="19">
    <source>
        <dbReference type="PDB" id="7MOI"/>
    </source>
</evidence>
<evidence type="ECO:0007744" key="20">
    <source>
        <dbReference type="PDB" id="7MOJ"/>
    </source>
</evidence>
<evidence type="ECO:0007744" key="21">
    <source>
        <dbReference type="PDB" id="7MOK"/>
    </source>
</evidence>
<evidence type="ECO:0007744" key="22">
    <source>
        <dbReference type="PDB" id="7MOL"/>
    </source>
</evidence>
<evidence type="ECO:0007744" key="23">
    <source>
        <dbReference type="PDB" id="7MOM"/>
    </source>
</evidence>
<evidence type="ECO:0007829" key="24">
    <source>
        <dbReference type="PDB" id="1XRI"/>
    </source>
</evidence>
<evidence type="ECO:0007829" key="25">
    <source>
        <dbReference type="PDB" id="7MOD"/>
    </source>
</evidence>